<comment type="subcellular location">
    <subcellularLocation>
        <location evidence="1">Secreted</location>
    </subcellularLocation>
</comment>
<comment type="developmental stage">
    <text evidence="3">Expressed during auxin-induced lateral root formation.</text>
</comment>
<comment type="induction">
    <text evidence="3">Induced between 4 and 8 hours after treatment with auxin and remains high for at least 24 hours.</text>
</comment>
<comment type="similarity">
    <text evidence="4">Belongs to the plant LTP family. PEARLI1 subfamily.</text>
</comment>
<dbReference type="EMBL" id="AF098630">
    <property type="protein sequence ID" value="AAD12258.1"/>
    <property type="molecule type" value="Genomic_DNA"/>
</dbReference>
<dbReference type="EMBL" id="AL049730">
    <property type="protein sequence ID" value="CAB41725.1"/>
    <property type="molecule type" value="Genomic_DNA"/>
</dbReference>
<dbReference type="EMBL" id="AL161534">
    <property type="protein sequence ID" value="CAB78298.1"/>
    <property type="molecule type" value="Genomic_DNA"/>
</dbReference>
<dbReference type="EMBL" id="CP002687">
    <property type="protein sequence ID" value="AEE83146.1"/>
    <property type="molecule type" value="Genomic_DNA"/>
</dbReference>
<dbReference type="EMBL" id="AF410287">
    <property type="protein sequence ID" value="AAK95273.1"/>
    <property type="molecule type" value="mRNA"/>
</dbReference>
<dbReference type="EMBL" id="AY093728">
    <property type="protein sequence ID" value="AAM10352.1"/>
    <property type="molecule type" value="mRNA"/>
</dbReference>
<dbReference type="EMBL" id="AY085981">
    <property type="protein sequence ID" value="AAM63191.1"/>
    <property type="molecule type" value="mRNA"/>
</dbReference>
<dbReference type="PIR" id="T07647">
    <property type="entry name" value="T07647"/>
</dbReference>
<dbReference type="RefSeq" id="NP_192992.1">
    <property type="nucleotide sequence ID" value="NM_117325.2"/>
</dbReference>
<dbReference type="SMR" id="Q9S7I2"/>
<dbReference type="STRING" id="3702.Q9S7I2"/>
<dbReference type="PaxDb" id="3702-AT4G12550.1"/>
<dbReference type="EnsemblPlants" id="AT4G12550.1">
    <property type="protein sequence ID" value="AT4G12550.1"/>
    <property type="gene ID" value="AT4G12550"/>
</dbReference>
<dbReference type="GeneID" id="826868"/>
<dbReference type="Gramene" id="AT4G12550.1">
    <property type="protein sequence ID" value="AT4G12550.1"/>
    <property type="gene ID" value="AT4G12550"/>
</dbReference>
<dbReference type="KEGG" id="ath:AT4G12550"/>
<dbReference type="Araport" id="AT4G12550"/>
<dbReference type="TAIR" id="AT4G12550">
    <property type="gene designation" value="AIR1"/>
</dbReference>
<dbReference type="eggNOG" id="ENOG502RZES">
    <property type="taxonomic scope" value="Eukaryota"/>
</dbReference>
<dbReference type="HOGENOM" id="CLU_055715_1_2_1"/>
<dbReference type="InParanoid" id="Q9S7I2"/>
<dbReference type="OMA" id="HANNPKH"/>
<dbReference type="PhylomeDB" id="Q9S7I2"/>
<dbReference type="PRO" id="PR:Q9S7I2"/>
<dbReference type="Proteomes" id="UP000006548">
    <property type="component" value="Chromosome 4"/>
</dbReference>
<dbReference type="ExpressionAtlas" id="Q9S7I2">
    <property type="expression patterns" value="baseline and differential"/>
</dbReference>
<dbReference type="GO" id="GO:0005576">
    <property type="term" value="C:extracellular region"/>
    <property type="evidence" value="ECO:0007669"/>
    <property type="project" value="UniProtKB-SubCell"/>
</dbReference>
<dbReference type="GO" id="GO:0010102">
    <property type="term" value="P:lateral root morphogenesis"/>
    <property type="evidence" value="ECO:0000270"/>
    <property type="project" value="TAIR"/>
</dbReference>
<dbReference type="GO" id="GO:0009733">
    <property type="term" value="P:response to auxin"/>
    <property type="evidence" value="ECO:0000270"/>
    <property type="project" value="TAIR"/>
</dbReference>
<dbReference type="CDD" id="cd01958">
    <property type="entry name" value="HPS_like"/>
    <property type="match status" value="1"/>
</dbReference>
<dbReference type="FunFam" id="1.10.110.10:FF:000003">
    <property type="entry name" value="pEARLI1-like lipid transfer protein 1"/>
    <property type="match status" value="1"/>
</dbReference>
<dbReference type="Gene3D" id="1.10.110.10">
    <property type="entry name" value="Plant lipid-transfer and hydrophobic proteins"/>
    <property type="match status" value="1"/>
</dbReference>
<dbReference type="InterPro" id="IPR036312">
    <property type="entry name" value="Bifun_inhib/LTP/seed_sf"/>
</dbReference>
<dbReference type="InterPro" id="IPR016140">
    <property type="entry name" value="Bifunc_inhib/LTP/seed_store"/>
</dbReference>
<dbReference type="InterPro" id="IPR027923">
    <property type="entry name" value="Hydrophob_seed_dom"/>
</dbReference>
<dbReference type="InterPro" id="IPR051636">
    <property type="entry name" value="Plant_LTP/defense-related"/>
</dbReference>
<dbReference type="PANTHER" id="PTHR31731">
    <property type="match status" value="1"/>
</dbReference>
<dbReference type="Pfam" id="PF14547">
    <property type="entry name" value="Hydrophob_seed"/>
    <property type="match status" value="1"/>
</dbReference>
<dbReference type="SMART" id="SM00499">
    <property type="entry name" value="AAI"/>
    <property type="match status" value="1"/>
</dbReference>
<dbReference type="SUPFAM" id="SSF47699">
    <property type="entry name" value="Bifunctional inhibitor/lipid-transfer protein/seed storage 2S albumin"/>
    <property type="match status" value="1"/>
</dbReference>
<proteinExistence type="evidence at transcript level"/>
<protein>
    <recommendedName>
        <fullName>Putative lipid-binding protein AIR1</fullName>
    </recommendedName>
    <alternativeName>
        <fullName>Auxin-induced in root cultures protein 1</fullName>
    </alternativeName>
</protein>
<evidence type="ECO:0000250" key="1"/>
<evidence type="ECO:0000255" key="2"/>
<evidence type="ECO:0000269" key="3">
    <source>
    </source>
</evidence>
<evidence type="ECO:0000305" key="4"/>
<reference key="1">
    <citation type="journal article" date="1999" name="Plant Mol. Biol.">
        <title>Isolation and characterization of cDNA clones corresponding with mRNAs that accumulate during auxin-induced lateral root formation.</title>
        <authorList>
            <person name="Neuteboom L.W."/>
            <person name="Ng J.M.Y."/>
            <person name="Kuyper M."/>
            <person name="Clijdesdale O.R."/>
            <person name="Hooykaas P.J.J."/>
            <person name="van der Zaal B.J."/>
        </authorList>
    </citation>
    <scope>NUCLEOTIDE SEQUENCE [GENOMIC DNA]</scope>
    <scope>DEVELOPMENTAL STAGE</scope>
    <scope>INDUCTION</scope>
    <source>
        <strain>cv. Columbia</strain>
    </source>
</reference>
<reference key="2">
    <citation type="journal article" date="1999" name="Nature">
        <title>Sequence and analysis of chromosome 4 of the plant Arabidopsis thaliana.</title>
        <authorList>
            <person name="Mayer K.F.X."/>
            <person name="Schueller C."/>
            <person name="Wambutt R."/>
            <person name="Murphy G."/>
            <person name="Volckaert G."/>
            <person name="Pohl T."/>
            <person name="Duesterhoeft A."/>
            <person name="Stiekema W."/>
            <person name="Entian K.-D."/>
            <person name="Terryn N."/>
            <person name="Harris B."/>
            <person name="Ansorge W."/>
            <person name="Brandt P."/>
            <person name="Grivell L.A."/>
            <person name="Rieger M."/>
            <person name="Weichselgartner M."/>
            <person name="de Simone V."/>
            <person name="Obermaier B."/>
            <person name="Mache R."/>
            <person name="Mueller M."/>
            <person name="Kreis M."/>
            <person name="Delseny M."/>
            <person name="Puigdomenech P."/>
            <person name="Watson M."/>
            <person name="Schmidtheini T."/>
            <person name="Reichert B."/>
            <person name="Portetelle D."/>
            <person name="Perez-Alonso M."/>
            <person name="Boutry M."/>
            <person name="Bancroft I."/>
            <person name="Vos P."/>
            <person name="Hoheisel J."/>
            <person name="Zimmermann W."/>
            <person name="Wedler H."/>
            <person name="Ridley P."/>
            <person name="Langham S.-A."/>
            <person name="McCullagh B."/>
            <person name="Bilham L."/>
            <person name="Robben J."/>
            <person name="van der Schueren J."/>
            <person name="Grymonprez B."/>
            <person name="Chuang Y.-J."/>
            <person name="Vandenbussche F."/>
            <person name="Braeken M."/>
            <person name="Weltjens I."/>
            <person name="Voet M."/>
            <person name="Bastiaens I."/>
            <person name="Aert R."/>
            <person name="Defoor E."/>
            <person name="Weitzenegger T."/>
            <person name="Bothe G."/>
            <person name="Ramsperger U."/>
            <person name="Hilbert H."/>
            <person name="Braun M."/>
            <person name="Holzer E."/>
            <person name="Brandt A."/>
            <person name="Peters S."/>
            <person name="van Staveren M."/>
            <person name="Dirkse W."/>
            <person name="Mooijman P."/>
            <person name="Klein Lankhorst R."/>
            <person name="Rose M."/>
            <person name="Hauf J."/>
            <person name="Koetter P."/>
            <person name="Berneiser S."/>
            <person name="Hempel S."/>
            <person name="Feldpausch M."/>
            <person name="Lamberth S."/>
            <person name="Van den Daele H."/>
            <person name="De Keyser A."/>
            <person name="Buysshaert C."/>
            <person name="Gielen J."/>
            <person name="Villarroel R."/>
            <person name="De Clercq R."/>
            <person name="van Montagu M."/>
            <person name="Rogers J."/>
            <person name="Cronin A."/>
            <person name="Quail M.A."/>
            <person name="Bray-Allen S."/>
            <person name="Clark L."/>
            <person name="Doggett J."/>
            <person name="Hall S."/>
            <person name="Kay M."/>
            <person name="Lennard N."/>
            <person name="McLay K."/>
            <person name="Mayes R."/>
            <person name="Pettett A."/>
            <person name="Rajandream M.A."/>
            <person name="Lyne M."/>
            <person name="Benes V."/>
            <person name="Rechmann S."/>
            <person name="Borkova D."/>
            <person name="Bloecker H."/>
            <person name="Scharfe M."/>
            <person name="Grimm M."/>
            <person name="Loehnert T.-H."/>
            <person name="Dose S."/>
            <person name="de Haan M."/>
            <person name="Maarse A.C."/>
            <person name="Schaefer M."/>
            <person name="Mueller-Auer S."/>
            <person name="Gabel C."/>
            <person name="Fuchs M."/>
            <person name="Fartmann B."/>
            <person name="Granderath K."/>
            <person name="Dauner D."/>
            <person name="Herzl A."/>
            <person name="Neumann S."/>
            <person name="Argiriou A."/>
            <person name="Vitale D."/>
            <person name="Liguori R."/>
            <person name="Piravandi E."/>
            <person name="Massenet O."/>
            <person name="Quigley F."/>
            <person name="Clabauld G."/>
            <person name="Muendlein A."/>
            <person name="Felber R."/>
            <person name="Schnabl S."/>
            <person name="Hiller R."/>
            <person name="Schmidt W."/>
            <person name="Lecharny A."/>
            <person name="Aubourg S."/>
            <person name="Chefdor F."/>
            <person name="Cooke R."/>
            <person name="Berger C."/>
            <person name="Monfort A."/>
            <person name="Casacuberta E."/>
            <person name="Gibbons T."/>
            <person name="Weber N."/>
            <person name="Vandenbol M."/>
            <person name="Bargues M."/>
            <person name="Terol J."/>
            <person name="Torres A."/>
            <person name="Perez-Perez A."/>
            <person name="Purnelle B."/>
            <person name="Bent E."/>
            <person name="Johnson S."/>
            <person name="Tacon D."/>
            <person name="Jesse T."/>
            <person name="Heijnen L."/>
            <person name="Schwarz S."/>
            <person name="Scholler P."/>
            <person name="Heber S."/>
            <person name="Francs P."/>
            <person name="Bielke C."/>
            <person name="Frishman D."/>
            <person name="Haase D."/>
            <person name="Lemcke K."/>
            <person name="Mewes H.-W."/>
            <person name="Stocker S."/>
            <person name="Zaccaria P."/>
            <person name="Bevan M."/>
            <person name="Wilson R.K."/>
            <person name="de la Bastide M."/>
            <person name="Habermann K."/>
            <person name="Parnell L."/>
            <person name="Dedhia N."/>
            <person name="Gnoj L."/>
            <person name="Schutz K."/>
            <person name="Huang E."/>
            <person name="Spiegel L."/>
            <person name="Sekhon M."/>
            <person name="Murray J."/>
            <person name="Sheet P."/>
            <person name="Cordes M."/>
            <person name="Abu-Threideh J."/>
            <person name="Stoneking T."/>
            <person name="Kalicki J."/>
            <person name="Graves T."/>
            <person name="Harmon G."/>
            <person name="Edwards J."/>
            <person name="Latreille P."/>
            <person name="Courtney L."/>
            <person name="Cloud J."/>
            <person name="Abbott A."/>
            <person name="Scott K."/>
            <person name="Johnson D."/>
            <person name="Minx P."/>
            <person name="Bentley D."/>
            <person name="Fulton B."/>
            <person name="Miller N."/>
            <person name="Greco T."/>
            <person name="Kemp K."/>
            <person name="Kramer J."/>
            <person name="Fulton L."/>
            <person name="Mardis E."/>
            <person name="Dante M."/>
            <person name="Pepin K."/>
            <person name="Hillier L.W."/>
            <person name="Nelson J."/>
            <person name="Spieth J."/>
            <person name="Ryan E."/>
            <person name="Andrews S."/>
            <person name="Geisel C."/>
            <person name="Layman D."/>
            <person name="Du H."/>
            <person name="Ali J."/>
            <person name="Berghoff A."/>
            <person name="Jones K."/>
            <person name="Drone K."/>
            <person name="Cotton M."/>
            <person name="Joshu C."/>
            <person name="Antonoiu B."/>
            <person name="Zidanic M."/>
            <person name="Strong C."/>
            <person name="Sun H."/>
            <person name="Lamar B."/>
            <person name="Yordan C."/>
            <person name="Ma P."/>
            <person name="Zhong J."/>
            <person name="Preston R."/>
            <person name="Vil D."/>
            <person name="Shekher M."/>
            <person name="Matero A."/>
            <person name="Shah R."/>
            <person name="Swaby I.K."/>
            <person name="O'Shaughnessy A."/>
            <person name="Rodriguez M."/>
            <person name="Hoffman J."/>
            <person name="Till S."/>
            <person name="Granat S."/>
            <person name="Shohdy N."/>
            <person name="Hasegawa A."/>
            <person name="Hameed A."/>
            <person name="Lodhi M."/>
            <person name="Johnson A."/>
            <person name="Chen E."/>
            <person name="Marra M.A."/>
            <person name="Martienssen R."/>
            <person name="McCombie W.R."/>
        </authorList>
    </citation>
    <scope>NUCLEOTIDE SEQUENCE [LARGE SCALE GENOMIC DNA]</scope>
    <source>
        <strain>cv. Columbia</strain>
    </source>
</reference>
<reference key="3">
    <citation type="journal article" date="2017" name="Plant J.">
        <title>Araport11: a complete reannotation of the Arabidopsis thaliana reference genome.</title>
        <authorList>
            <person name="Cheng C.Y."/>
            <person name="Krishnakumar V."/>
            <person name="Chan A.P."/>
            <person name="Thibaud-Nissen F."/>
            <person name="Schobel S."/>
            <person name="Town C.D."/>
        </authorList>
    </citation>
    <scope>GENOME REANNOTATION</scope>
    <source>
        <strain>cv. Columbia</strain>
    </source>
</reference>
<reference key="4">
    <citation type="journal article" date="2003" name="Science">
        <title>Empirical analysis of transcriptional activity in the Arabidopsis genome.</title>
        <authorList>
            <person name="Yamada K."/>
            <person name="Lim J."/>
            <person name="Dale J.M."/>
            <person name="Chen H."/>
            <person name="Shinn P."/>
            <person name="Palm C.J."/>
            <person name="Southwick A.M."/>
            <person name="Wu H.C."/>
            <person name="Kim C.J."/>
            <person name="Nguyen M."/>
            <person name="Pham P.K."/>
            <person name="Cheuk R.F."/>
            <person name="Karlin-Newmann G."/>
            <person name="Liu S.X."/>
            <person name="Lam B."/>
            <person name="Sakano H."/>
            <person name="Wu T."/>
            <person name="Yu G."/>
            <person name="Miranda M."/>
            <person name="Quach H.L."/>
            <person name="Tripp M."/>
            <person name="Chang C.H."/>
            <person name="Lee J.M."/>
            <person name="Toriumi M.J."/>
            <person name="Chan M.M."/>
            <person name="Tang C.C."/>
            <person name="Onodera C.S."/>
            <person name="Deng J.M."/>
            <person name="Akiyama K."/>
            <person name="Ansari Y."/>
            <person name="Arakawa T."/>
            <person name="Banh J."/>
            <person name="Banno F."/>
            <person name="Bowser L."/>
            <person name="Brooks S.Y."/>
            <person name="Carninci P."/>
            <person name="Chao Q."/>
            <person name="Choy N."/>
            <person name="Enju A."/>
            <person name="Goldsmith A.D."/>
            <person name="Gurjal M."/>
            <person name="Hansen N.F."/>
            <person name="Hayashizaki Y."/>
            <person name="Johnson-Hopson C."/>
            <person name="Hsuan V.W."/>
            <person name="Iida K."/>
            <person name="Karnes M."/>
            <person name="Khan S."/>
            <person name="Koesema E."/>
            <person name="Ishida J."/>
            <person name="Jiang P.X."/>
            <person name="Jones T."/>
            <person name="Kawai J."/>
            <person name="Kamiya A."/>
            <person name="Meyers C."/>
            <person name="Nakajima M."/>
            <person name="Narusaka M."/>
            <person name="Seki M."/>
            <person name="Sakurai T."/>
            <person name="Satou M."/>
            <person name="Tamse R."/>
            <person name="Vaysberg M."/>
            <person name="Wallender E.K."/>
            <person name="Wong C."/>
            <person name="Yamamura Y."/>
            <person name="Yuan S."/>
            <person name="Shinozaki K."/>
            <person name="Davis R.W."/>
            <person name="Theologis A."/>
            <person name="Ecker J.R."/>
        </authorList>
    </citation>
    <scope>NUCLEOTIDE SEQUENCE [LARGE SCALE MRNA]</scope>
    <source>
        <strain>cv. Columbia</strain>
    </source>
</reference>
<reference key="5">
    <citation type="submission" date="2002-03" db="EMBL/GenBank/DDBJ databases">
        <title>Full-length cDNA from Arabidopsis thaliana.</title>
        <authorList>
            <person name="Brover V.V."/>
            <person name="Troukhan M.E."/>
            <person name="Alexandrov N.A."/>
            <person name="Lu Y.-P."/>
            <person name="Flavell R.B."/>
            <person name="Feldmann K.A."/>
        </authorList>
    </citation>
    <scope>NUCLEOTIDE SEQUENCE [LARGE SCALE MRNA]</scope>
</reference>
<name>AIR1_ARATH</name>
<keyword id="KW-1015">Disulfide bond</keyword>
<keyword id="KW-1185">Reference proteome</keyword>
<keyword id="KW-0964">Secreted</keyword>
<keyword id="KW-0732">Signal</keyword>
<sequence>MAPRTPLALFVSLNLLFFTYTSATTGTCPKNSIEIGTCVTVLNLVDLTLGNPPVKPCCSLIQGLADLEAAVCLCTAVKASILGIVNINLPINLSVLLNVCSRNAPKSFQCA</sequence>
<feature type="signal peptide" evidence="2">
    <location>
        <begin position="1"/>
        <end position="23"/>
    </location>
</feature>
<feature type="chain" id="PRO_0000429358" description="Putative lipid-binding protein AIR1">
    <location>
        <begin position="24"/>
        <end position="111"/>
    </location>
</feature>
<feature type="disulfide bond" evidence="2">
    <location>
        <begin position="28"/>
        <end position="58"/>
    </location>
</feature>
<feature type="disulfide bond" evidence="2">
    <location>
        <begin position="38"/>
        <end position="57"/>
    </location>
</feature>
<feature type="disulfide bond" evidence="2">
    <location>
        <begin position="74"/>
        <end position="110"/>
    </location>
</feature>
<feature type="sequence conflict" description="In Ref. 5; AAM63191." evidence="4" ref="5">
    <original>V</original>
    <variation>L</variation>
    <location>
        <position position="77"/>
    </location>
</feature>
<organism>
    <name type="scientific">Arabidopsis thaliana</name>
    <name type="common">Mouse-ear cress</name>
    <dbReference type="NCBI Taxonomy" id="3702"/>
    <lineage>
        <taxon>Eukaryota</taxon>
        <taxon>Viridiplantae</taxon>
        <taxon>Streptophyta</taxon>
        <taxon>Embryophyta</taxon>
        <taxon>Tracheophyta</taxon>
        <taxon>Spermatophyta</taxon>
        <taxon>Magnoliopsida</taxon>
        <taxon>eudicotyledons</taxon>
        <taxon>Gunneridae</taxon>
        <taxon>Pentapetalae</taxon>
        <taxon>rosids</taxon>
        <taxon>malvids</taxon>
        <taxon>Brassicales</taxon>
        <taxon>Brassicaceae</taxon>
        <taxon>Camelineae</taxon>
        <taxon>Arabidopsis</taxon>
    </lineage>
</organism>
<accession>Q9S7I2</accession>
<accession>Q8LDJ2</accession>
<gene>
    <name type="primary">AIR1</name>
    <name type="synonym">AIR1A</name>
    <name type="ordered locus">At4g12550</name>
    <name type="ORF">T1P17.140</name>
</gene>